<proteinExistence type="evidence at protein level"/>
<gene>
    <name type="primary">fur</name>
</gene>
<dbReference type="EMBL" id="Y13657">
    <property type="protein sequence ID" value="CAA74010.2"/>
    <property type="molecule type" value="Genomic_DNA"/>
</dbReference>
<dbReference type="RefSeq" id="WP_003544875.1">
    <property type="nucleotide sequence ID" value="NZ_WIFD01000001.1"/>
</dbReference>
<dbReference type="PDB" id="5FD5">
    <property type="method" value="X-ray"/>
    <property type="resolution" value="1.91 A"/>
    <property type="chains" value="A/B/C/D/E=2-142"/>
</dbReference>
<dbReference type="PDB" id="5FD6">
    <property type="method" value="X-ray"/>
    <property type="resolution" value="2.48 A"/>
    <property type="chains" value="A/B/C/D=1-142"/>
</dbReference>
<dbReference type="PDBsum" id="5FD5"/>
<dbReference type="PDBsum" id="5FD6"/>
<dbReference type="SMR" id="O07315"/>
<dbReference type="OMA" id="YLYGVCT"/>
<dbReference type="GO" id="GO:0005829">
    <property type="term" value="C:cytosol"/>
    <property type="evidence" value="ECO:0007669"/>
    <property type="project" value="TreeGrafter"/>
</dbReference>
<dbReference type="GO" id="GO:0003700">
    <property type="term" value="F:DNA-binding transcription factor activity"/>
    <property type="evidence" value="ECO:0007669"/>
    <property type="project" value="InterPro"/>
</dbReference>
<dbReference type="GO" id="GO:0000976">
    <property type="term" value="F:transcription cis-regulatory region binding"/>
    <property type="evidence" value="ECO:0007669"/>
    <property type="project" value="TreeGrafter"/>
</dbReference>
<dbReference type="GO" id="GO:0008270">
    <property type="term" value="F:zinc ion binding"/>
    <property type="evidence" value="ECO:0007669"/>
    <property type="project" value="TreeGrafter"/>
</dbReference>
<dbReference type="GO" id="GO:0045892">
    <property type="term" value="P:negative regulation of DNA-templated transcription"/>
    <property type="evidence" value="ECO:0007669"/>
    <property type="project" value="TreeGrafter"/>
</dbReference>
<dbReference type="GO" id="GO:1900376">
    <property type="term" value="P:regulation of secondary metabolite biosynthetic process"/>
    <property type="evidence" value="ECO:0007669"/>
    <property type="project" value="TreeGrafter"/>
</dbReference>
<dbReference type="CDD" id="cd07153">
    <property type="entry name" value="Fur_like"/>
    <property type="match status" value="1"/>
</dbReference>
<dbReference type="FunFam" id="3.30.1490.190:FF:000001">
    <property type="entry name" value="Ferric uptake regulation protein"/>
    <property type="match status" value="1"/>
</dbReference>
<dbReference type="FunFam" id="1.10.10.10:FF:000051">
    <property type="entry name" value="Fur family transcriptional regulator"/>
    <property type="match status" value="1"/>
</dbReference>
<dbReference type="Gene3D" id="3.30.1490.190">
    <property type="match status" value="1"/>
</dbReference>
<dbReference type="Gene3D" id="1.10.10.10">
    <property type="entry name" value="Winged helix-like DNA-binding domain superfamily/Winged helix DNA-binding domain"/>
    <property type="match status" value="1"/>
</dbReference>
<dbReference type="InterPro" id="IPR002481">
    <property type="entry name" value="FUR"/>
</dbReference>
<dbReference type="InterPro" id="IPR043135">
    <property type="entry name" value="Fur_C"/>
</dbReference>
<dbReference type="InterPro" id="IPR036388">
    <property type="entry name" value="WH-like_DNA-bd_sf"/>
</dbReference>
<dbReference type="InterPro" id="IPR036390">
    <property type="entry name" value="WH_DNA-bd_sf"/>
</dbReference>
<dbReference type="PANTHER" id="PTHR33202:SF2">
    <property type="entry name" value="FERRIC UPTAKE REGULATION PROTEIN"/>
    <property type="match status" value="1"/>
</dbReference>
<dbReference type="PANTHER" id="PTHR33202">
    <property type="entry name" value="ZINC UPTAKE REGULATION PROTEIN"/>
    <property type="match status" value="1"/>
</dbReference>
<dbReference type="Pfam" id="PF01475">
    <property type="entry name" value="FUR"/>
    <property type="match status" value="1"/>
</dbReference>
<dbReference type="SUPFAM" id="SSF46785">
    <property type="entry name" value="Winged helix' DNA-binding domain"/>
    <property type="match status" value="1"/>
</dbReference>
<evidence type="ECO:0000250" key="1"/>
<evidence type="ECO:0000305" key="2"/>
<evidence type="ECO:0007829" key="3">
    <source>
        <dbReference type="PDB" id="5FD5"/>
    </source>
</evidence>
<evidence type="ECO:0007829" key="4">
    <source>
        <dbReference type="PDB" id="5FD6"/>
    </source>
</evidence>
<protein>
    <recommendedName>
        <fullName>Ferric uptake regulation protein</fullName>
        <shortName>Ferric uptake regulator</shortName>
    </recommendedName>
</protein>
<comment type="function">
    <text evidence="1">Acts as a global negative controlling element, employing Fe(2+) as a cofactor to bind the operator of the repressed genes.</text>
</comment>
<comment type="subunit">
    <text evidence="1">Homodimer.</text>
</comment>
<comment type="subcellular location">
    <subcellularLocation>
        <location evidence="1">Cytoplasm</location>
    </subcellularLocation>
</comment>
<comment type="similarity">
    <text evidence="2">Belongs to the Fur family.</text>
</comment>
<name>FUR_RHILV</name>
<reference key="1">
    <citation type="journal article" date="1998" name="FEMS Microbiol. Lett.">
        <title>Is the fur gene of Rhizobium leguminosarum essential?</title>
        <authorList>
            <person name="de Luca N.G."/>
            <person name="Wexler M."/>
            <person name="Pereira M.J."/>
            <person name="Yeoman K.H."/>
            <person name="Johnston A.W."/>
        </authorList>
    </citation>
    <scope>NUCLEOTIDE SEQUENCE [GENOMIC DNA]</scope>
    <source>
        <strain>8401:PRL1</strain>
    </source>
</reference>
<reference key="2">
    <citation type="submission" date="2002-07" db="EMBL/GenBank/DDBJ databases">
        <authorList>
            <person name="Wexler M."/>
        </authorList>
    </citation>
    <scope>SEQUENCE REVISION TO 80</scope>
</reference>
<organism>
    <name type="scientific">Rhizobium leguminosarum bv. viciae</name>
    <dbReference type="NCBI Taxonomy" id="387"/>
    <lineage>
        <taxon>Bacteria</taxon>
        <taxon>Pseudomonadati</taxon>
        <taxon>Pseudomonadota</taxon>
        <taxon>Alphaproteobacteria</taxon>
        <taxon>Hyphomicrobiales</taxon>
        <taxon>Rhizobiaceae</taxon>
        <taxon>Rhizobium/Agrobacterium group</taxon>
        <taxon>Rhizobium</taxon>
    </lineage>
</organism>
<accession>O07315</accession>
<keyword id="KW-0002">3D-structure</keyword>
<keyword id="KW-0963">Cytoplasm</keyword>
<keyword id="KW-0238">DNA-binding</keyword>
<keyword id="KW-0408">Iron</keyword>
<keyword id="KW-0479">Metal-binding</keyword>
<keyword id="KW-0678">Repressor</keyword>
<keyword id="KW-0804">Transcription</keyword>
<keyword id="KW-0805">Transcription regulation</keyword>
<keyword id="KW-0862">Zinc</keyword>
<sequence>MTDVAKTLEELCTERGMRMTEQRRVIARILEDSEDHPDVEELYRRSVKVDAKISISTVYRTVKLFEDAGIIARHDFRDGRSRYETVPEEHHDHLIDLKTGTVIEFRSPEIEALQERIAREHGFRLVDHRLELYGVPLKKEDL</sequence>
<feature type="chain" id="PRO_0000095570" description="Ferric uptake regulation protein">
    <location>
        <begin position="1"/>
        <end position="142"/>
    </location>
</feature>
<feature type="region of interest" description="DNA-binding" evidence="1">
    <location>
        <begin position="1"/>
        <end position="87"/>
    </location>
</feature>
<feature type="region of interest" description="Dimerization" evidence="1">
    <location>
        <begin position="88"/>
        <end position="142"/>
    </location>
</feature>
<feature type="binding site" evidence="1">
    <location>
        <position position="36"/>
    </location>
    <ligand>
        <name>Zn(2+)</name>
        <dbReference type="ChEBI" id="CHEBI:29105"/>
    </ligand>
</feature>
<feature type="binding site" evidence="1">
    <location>
        <position position="84"/>
    </location>
    <ligand>
        <name>Zn(2+)</name>
        <dbReference type="ChEBI" id="CHEBI:29105"/>
    </ligand>
</feature>
<feature type="binding site" evidence="1">
    <location>
        <position position="90"/>
    </location>
    <ligand>
        <name>Fe cation</name>
        <dbReference type="ChEBI" id="CHEBI:24875"/>
    </ligand>
</feature>
<feature type="binding site" evidence="1">
    <location>
        <position position="92"/>
    </location>
    <ligand>
        <name>Fe cation</name>
        <dbReference type="ChEBI" id="CHEBI:24875"/>
    </ligand>
</feature>
<feature type="binding site" evidence="1">
    <location>
        <position position="93"/>
    </location>
    <ligand>
        <name>Zn(2+)</name>
        <dbReference type="ChEBI" id="CHEBI:29105"/>
    </ligand>
</feature>
<feature type="binding site" evidence="1">
    <location>
        <position position="104"/>
    </location>
    <ligand>
        <name>Zn(2+)</name>
        <dbReference type="ChEBI" id="CHEBI:29105"/>
    </ligand>
</feature>
<feature type="binding site" evidence="1">
    <location>
        <position position="111"/>
    </location>
    <ligand>
        <name>Fe cation</name>
        <dbReference type="ChEBI" id="CHEBI:24875"/>
    </ligand>
</feature>
<feature type="binding site" evidence="1">
    <location>
        <position position="128"/>
    </location>
    <ligand>
        <name>Fe cation</name>
        <dbReference type="ChEBI" id="CHEBI:24875"/>
    </ligand>
</feature>
<feature type="helix" evidence="3">
    <location>
        <begin position="8"/>
        <end position="14"/>
    </location>
</feature>
<feature type="helix" evidence="3">
    <location>
        <begin position="21"/>
        <end position="32"/>
    </location>
</feature>
<feature type="helix" evidence="3">
    <location>
        <begin position="39"/>
        <end position="49"/>
    </location>
</feature>
<feature type="helix" evidence="3">
    <location>
        <begin position="55"/>
        <end position="67"/>
    </location>
</feature>
<feature type="strand" evidence="3">
    <location>
        <begin position="70"/>
        <end position="75"/>
    </location>
</feature>
<feature type="turn" evidence="4">
    <location>
        <begin position="77"/>
        <end position="79"/>
    </location>
</feature>
<feature type="strand" evidence="3">
    <location>
        <begin position="81"/>
        <end position="85"/>
    </location>
</feature>
<feature type="strand" evidence="3">
    <location>
        <begin position="92"/>
        <end position="96"/>
    </location>
</feature>
<feature type="turn" evidence="3">
    <location>
        <begin position="97"/>
        <end position="99"/>
    </location>
</feature>
<feature type="strand" evidence="3">
    <location>
        <begin position="102"/>
        <end position="105"/>
    </location>
</feature>
<feature type="helix" evidence="3">
    <location>
        <begin position="108"/>
        <end position="120"/>
    </location>
</feature>
<feature type="strand" evidence="3">
    <location>
        <begin position="123"/>
        <end position="136"/>
    </location>
</feature>